<organism>
    <name type="scientific">Pyrococcus furiosus (strain ATCC 43587 / DSM 3638 / JCM 8422 / Vc1)</name>
    <dbReference type="NCBI Taxonomy" id="186497"/>
    <lineage>
        <taxon>Archaea</taxon>
        <taxon>Methanobacteriati</taxon>
        <taxon>Methanobacteriota</taxon>
        <taxon>Thermococci</taxon>
        <taxon>Thermococcales</taxon>
        <taxon>Thermococcaceae</taxon>
        <taxon>Pyrococcus</taxon>
    </lineage>
</organism>
<accession>Q8U182</accession>
<proteinExistence type="evidence at protein level"/>
<comment type="function">
    <text evidence="1 2">Zinc phosphodiesterase, which displays some tRNA 3'-processing endonuclease activity. Probably involved in tRNA maturation, by removing a 3'-trailer from precursor tRNA. Also shows activity toward a broad range of substrates, such as intron containing pre-tRNAs, 5' extended precursors and non-RNA substrates.</text>
</comment>
<comment type="catalytic activity">
    <reaction evidence="1 2">
        <text>Endonucleolytic cleavage of RNA, removing extra 3' nucleotides from tRNA precursor, generating 3' termini of tRNAs. A 3'-hydroxy group is left at the tRNA terminus and a 5'-phosphoryl group is left at the trailer molecule.</text>
        <dbReference type="EC" id="3.1.26.11"/>
    </reaction>
</comment>
<comment type="cofactor">
    <cofactor evidence="1">
        <name>Zn(2+)</name>
        <dbReference type="ChEBI" id="CHEBI:29105"/>
    </cofactor>
    <text evidence="1">Binds 2 Zn(2+) ions.</text>
</comment>
<comment type="biophysicochemical properties">
    <phDependence>
        <text evidence="2">Optimum pH is 7.0.</text>
    </phDependence>
    <temperatureDependence>
        <text evidence="2">Optimum temperature is 50 degrees Celsius.</text>
    </temperatureDependence>
</comment>
<comment type="subunit">
    <text evidence="1">Homodimer.</text>
</comment>
<comment type="similarity">
    <text evidence="1">Belongs to the RNase Z family.</text>
</comment>
<keyword id="KW-0255">Endonuclease</keyword>
<keyword id="KW-0378">Hydrolase</keyword>
<keyword id="KW-0479">Metal-binding</keyword>
<keyword id="KW-0540">Nuclease</keyword>
<keyword id="KW-1185">Reference proteome</keyword>
<keyword id="KW-0819">tRNA processing</keyword>
<keyword id="KW-0862">Zinc</keyword>
<feature type="chain" id="PRO_0000155933" description="Ribonuclease Z">
    <location>
        <begin position="1"/>
        <end position="307"/>
    </location>
</feature>
<feature type="active site" description="Proton acceptor" evidence="1">
    <location>
        <position position="65"/>
    </location>
</feature>
<feature type="binding site" evidence="1">
    <location>
        <position position="61"/>
    </location>
    <ligand>
        <name>Zn(2+)</name>
        <dbReference type="ChEBI" id="CHEBI:29105"/>
        <label>1</label>
        <note>catalytic</note>
    </ligand>
</feature>
<feature type="binding site" evidence="1">
    <location>
        <position position="63"/>
    </location>
    <ligand>
        <name>Zn(2+)</name>
        <dbReference type="ChEBI" id="CHEBI:29105"/>
        <label>1</label>
        <note>catalytic</note>
    </ligand>
</feature>
<feature type="binding site" evidence="1">
    <location>
        <position position="65"/>
    </location>
    <ligand>
        <name>Zn(2+)</name>
        <dbReference type="ChEBI" id="CHEBI:29105"/>
        <label>2</label>
        <note>catalytic</note>
    </ligand>
</feature>
<feature type="binding site" evidence="1">
    <location>
        <position position="66"/>
    </location>
    <ligand>
        <name>Zn(2+)</name>
        <dbReference type="ChEBI" id="CHEBI:29105"/>
        <label>2</label>
        <note>catalytic</note>
    </ligand>
</feature>
<feature type="binding site" evidence="1">
    <location>
        <position position="138"/>
    </location>
    <ligand>
        <name>Zn(2+)</name>
        <dbReference type="ChEBI" id="CHEBI:29105"/>
        <label>1</label>
        <note>catalytic</note>
    </ligand>
</feature>
<feature type="binding site" evidence="1">
    <location>
        <position position="208"/>
    </location>
    <ligand>
        <name>Zn(2+)</name>
        <dbReference type="ChEBI" id="CHEBI:29105"/>
        <label>1</label>
        <note>catalytic</note>
    </ligand>
</feature>
<feature type="binding site" evidence="1">
    <location>
        <position position="208"/>
    </location>
    <ligand>
        <name>Zn(2+)</name>
        <dbReference type="ChEBI" id="CHEBI:29105"/>
        <label>2</label>
        <note>catalytic</note>
    </ligand>
</feature>
<feature type="binding site" evidence="1">
    <location>
        <position position="264"/>
    </location>
    <ligand>
        <name>Zn(2+)</name>
        <dbReference type="ChEBI" id="CHEBI:29105"/>
        <label>2</label>
        <note>catalytic</note>
    </ligand>
</feature>
<protein>
    <recommendedName>
        <fullName evidence="1">Ribonuclease Z</fullName>
        <shortName evidence="1">RNase Z</shortName>
        <ecNumber evidence="1">3.1.26.11</ecNumber>
    </recommendedName>
    <alternativeName>
        <fullName evidence="1">tRNA 3 endonuclease</fullName>
    </alternativeName>
    <alternativeName>
        <fullName evidence="1">tRNase Z</fullName>
    </alternativeName>
</protein>
<reference key="1">
    <citation type="journal article" date="1999" name="Genetics">
        <title>Divergence of the hyperthermophilic archaea Pyrococcus furiosus and P. horikoshii inferred from complete genomic sequences.</title>
        <authorList>
            <person name="Maeder D.L."/>
            <person name="Weiss R.B."/>
            <person name="Dunn D.M."/>
            <person name="Cherry J.L."/>
            <person name="Gonzalez J.M."/>
            <person name="DiRuggiero J."/>
            <person name="Robb F.T."/>
        </authorList>
    </citation>
    <scope>NUCLEOTIDE SEQUENCE [LARGE SCALE GENOMIC DNA]</scope>
    <source>
        <strain>ATCC 43587 / DSM 3638 / JCM 8422 / Vc1</strain>
    </source>
</reference>
<reference key="2">
    <citation type="journal article" date="2008" name="Arch. Microbiol.">
        <title>Two archaeal tRNase Z enzymes: similar but different.</title>
        <authorList>
            <person name="Spath B."/>
            <person name="Schubert S."/>
            <person name="Lieberoth A."/>
            <person name="Settele F."/>
            <person name="Schutz S."/>
            <person name="Fischer S."/>
            <person name="Marchfelder A."/>
        </authorList>
    </citation>
    <scope>FUNCTION</scope>
    <scope>CATALYTIC ACTIVITY</scope>
    <scope>BIOPHYSICOCHEMICAL PROPERTIES</scope>
</reference>
<sequence>MIEVIFLGTGGIKPTPERNVPSIAIRIGSEIVLFDVGEGTLRQMEIAGLNPMRIKRIFITHFHGDHYLGLAAIIQTMNLWDRRETLHIYGPENSGEFISNFLKSGYFAPGFDVVVHEITGKARLQFENYEIWTFEVSHGIPALGYVFKEKDRRGNFDLEKIKSLGLTPGPWMKELEKRKIIKIGERVIRLSEVTGPKKRGAKVVYTGDTEPIDDIVEFSKRADLLIHEATYISSEHRKDSYHTTIEEAYEMFKSSKARHLALFHRAPRYSYQEYAVAAKELCPEAYVPRDFDRVFVGGMGNVIFKVR</sequence>
<dbReference type="EC" id="3.1.26.11" evidence="1"/>
<dbReference type="EMBL" id="AE009950">
    <property type="protein sequence ID" value="AAL81469.1"/>
    <property type="molecule type" value="Genomic_DNA"/>
</dbReference>
<dbReference type="RefSeq" id="WP_011012491.1">
    <property type="nucleotide sequence ID" value="NZ_CP023154.1"/>
</dbReference>
<dbReference type="SMR" id="Q8U182"/>
<dbReference type="STRING" id="186497.PF1345"/>
<dbReference type="PaxDb" id="186497-PF1345"/>
<dbReference type="KEGG" id="pfu:PF1345"/>
<dbReference type="PATRIC" id="fig|186497.12.peg.1408"/>
<dbReference type="eggNOG" id="arCOG00501">
    <property type="taxonomic scope" value="Archaea"/>
</dbReference>
<dbReference type="HOGENOM" id="CLU_031317_2_1_2"/>
<dbReference type="OrthoDB" id="85118at2157"/>
<dbReference type="PhylomeDB" id="Q8U182"/>
<dbReference type="BRENDA" id="3.1.26.11">
    <property type="organism ID" value="5243"/>
</dbReference>
<dbReference type="Proteomes" id="UP000001013">
    <property type="component" value="Chromosome"/>
</dbReference>
<dbReference type="GO" id="GO:0042781">
    <property type="term" value="F:3'-tRNA processing endoribonuclease activity"/>
    <property type="evidence" value="ECO:0007669"/>
    <property type="project" value="UniProtKB-UniRule"/>
</dbReference>
<dbReference type="GO" id="GO:0008270">
    <property type="term" value="F:zinc ion binding"/>
    <property type="evidence" value="ECO:0007669"/>
    <property type="project" value="UniProtKB-UniRule"/>
</dbReference>
<dbReference type="CDD" id="cd07717">
    <property type="entry name" value="RNaseZ_ZiPD-like_MBL-fold"/>
    <property type="match status" value="1"/>
</dbReference>
<dbReference type="Gene3D" id="3.60.15.10">
    <property type="entry name" value="Ribonuclease Z/Hydroxyacylglutathione hydrolase-like"/>
    <property type="match status" value="1"/>
</dbReference>
<dbReference type="HAMAP" id="MF_01818">
    <property type="entry name" value="RNase_Z_BN"/>
    <property type="match status" value="1"/>
</dbReference>
<dbReference type="InterPro" id="IPR001279">
    <property type="entry name" value="Metallo-B-lactamas"/>
</dbReference>
<dbReference type="InterPro" id="IPR036866">
    <property type="entry name" value="RibonucZ/Hydroxyglut_hydro"/>
</dbReference>
<dbReference type="InterPro" id="IPR013471">
    <property type="entry name" value="RNase_Z/BN"/>
</dbReference>
<dbReference type="NCBIfam" id="NF000801">
    <property type="entry name" value="PRK00055.1-3"/>
    <property type="match status" value="1"/>
</dbReference>
<dbReference type="NCBIfam" id="TIGR02651">
    <property type="entry name" value="RNase_Z"/>
    <property type="match status" value="1"/>
</dbReference>
<dbReference type="PANTHER" id="PTHR46018">
    <property type="entry name" value="ZINC PHOSPHODIESTERASE ELAC PROTEIN 1"/>
    <property type="match status" value="1"/>
</dbReference>
<dbReference type="PANTHER" id="PTHR46018:SF2">
    <property type="entry name" value="ZINC PHOSPHODIESTERASE ELAC PROTEIN 1"/>
    <property type="match status" value="1"/>
</dbReference>
<dbReference type="Pfam" id="PF00753">
    <property type="entry name" value="Lactamase_B"/>
    <property type="match status" value="1"/>
</dbReference>
<dbReference type="Pfam" id="PF12706">
    <property type="entry name" value="Lactamase_B_2"/>
    <property type="match status" value="1"/>
</dbReference>
<dbReference type="SMART" id="SM00849">
    <property type="entry name" value="Lactamase_B"/>
    <property type="match status" value="1"/>
</dbReference>
<dbReference type="SUPFAM" id="SSF56281">
    <property type="entry name" value="Metallo-hydrolase/oxidoreductase"/>
    <property type="match status" value="1"/>
</dbReference>
<gene>
    <name evidence="1" type="primary">rnz</name>
    <name type="ordered locus">PF1345</name>
</gene>
<evidence type="ECO:0000255" key="1">
    <source>
        <dbReference type="HAMAP-Rule" id="MF_01818"/>
    </source>
</evidence>
<evidence type="ECO:0000269" key="2">
    <source>
    </source>
</evidence>
<name>RNZ_PYRFU</name>